<organism>
    <name type="scientific">Mus musculus</name>
    <name type="common">Mouse</name>
    <dbReference type="NCBI Taxonomy" id="10090"/>
    <lineage>
        <taxon>Eukaryota</taxon>
        <taxon>Metazoa</taxon>
        <taxon>Chordata</taxon>
        <taxon>Craniata</taxon>
        <taxon>Vertebrata</taxon>
        <taxon>Euteleostomi</taxon>
        <taxon>Mammalia</taxon>
        <taxon>Eutheria</taxon>
        <taxon>Euarchontoglires</taxon>
        <taxon>Glires</taxon>
        <taxon>Rodentia</taxon>
        <taxon>Myomorpha</taxon>
        <taxon>Muroidea</taxon>
        <taxon>Muridae</taxon>
        <taxon>Murinae</taxon>
        <taxon>Mus</taxon>
        <taxon>Mus</taxon>
    </lineage>
</organism>
<protein>
    <recommendedName>
        <fullName>Lysine-specific demethylase 3B</fullName>
        <ecNumber evidence="2">1.14.11.65</ecNumber>
    </recommendedName>
    <alternativeName>
        <fullName>JmjC domain-containing histone demethylation protein 2B</fullName>
    </alternativeName>
    <alternativeName>
        <fullName>Jumonji domain-containing protein 1B</fullName>
    </alternativeName>
    <alternativeName>
        <fullName evidence="7">[histone H3]-dimethyl-L-lysine(9) demethylase 3B</fullName>
    </alternativeName>
</protein>
<name>KDM3B_MOUSE</name>
<feature type="initiator methionine" description="Removed" evidence="2">
    <location>
        <position position="1"/>
    </location>
</feature>
<feature type="chain" id="PRO_0000234374" description="Lysine-specific demethylase 3B">
    <location>
        <begin position="2"/>
        <end position="1762"/>
    </location>
</feature>
<feature type="domain" description="JmjC" evidence="4">
    <location>
        <begin position="1499"/>
        <end position="1722"/>
    </location>
</feature>
<feature type="zinc finger region" description="C6-type" evidence="3">
    <location>
        <begin position="1032"/>
        <end position="1057"/>
    </location>
</feature>
<feature type="region of interest" description="Disordered" evidence="5">
    <location>
        <begin position="253"/>
        <end position="350"/>
    </location>
</feature>
<feature type="region of interest" description="Disordered" evidence="5">
    <location>
        <begin position="426"/>
        <end position="468"/>
    </location>
</feature>
<feature type="region of interest" description="Disordered" evidence="5">
    <location>
        <begin position="574"/>
        <end position="613"/>
    </location>
</feature>
<feature type="region of interest" description="Disordered" evidence="5">
    <location>
        <begin position="713"/>
        <end position="763"/>
    </location>
</feature>
<feature type="region of interest" description="Disordered" evidence="5">
    <location>
        <begin position="806"/>
        <end position="853"/>
    </location>
</feature>
<feature type="region of interest" description="Disordered" evidence="5">
    <location>
        <begin position="1146"/>
        <end position="1217"/>
    </location>
</feature>
<feature type="region of interest" description="Disordered" evidence="5">
    <location>
        <begin position="1285"/>
        <end position="1306"/>
    </location>
</feature>
<feature type="short sequence motif" description="LXXLL motif">
    <location>
        <begin position="1294"/>
        <end position="1298"/>
    </location>
</feature>
<feature type="compositionally biased region" description="Basic and acidic residues" evidence="5">
    <location>
        <begin position="299"/>
        <end position="310"/>
    </location>
</feature>
<feature type="compositionally biased region" description="Low complexity" evidence="5">
    <location>
        <begin position="426"/>
        <end position="435"/>
    </location>
</feature>
<feature type="compositionally biased region" description="Polar residues" evidence="5">
    <location>
        <begin position="453"/>
        <end position="465"/>
    </location>
</feature>
<feature type="compositionally biased region" description="Polar residues" evidence="5">
    <location>
        <begin position="713"/>
        <end position="746"/>
    </location>
</feature>
<feature type="compositionally biased region" description="Polar residues" evidence="5">
    <location>
        <begin position="1146"/>
        <end position="1163"/>
    </location>
</feature>
<feature type="binding site" evidence="4">
    <location>
        <position position="1561"/>
    </location>
    <ligand>
        <name>Fe cation</name>
        <dbReference type="ChEBI" id="CHEBI:24875"/>
        <note>catalytic</note>
    </ligand>
</feature>
<feature type="binding site" evidence="4">
    <location>
        <position position="1563"/>
    </location>
    <ligand>
        <name>Fe cation</name>
        <dbReference type="ChEBI" id="CHEBI:24875"/>
        <note>catalytic</note>
    </ligand>
</feature>
<feature type="binding site" evidence="4">
    <location>
        <position position="1690"/>
    </location>
    <ligand>
        <name>Fe cation</name>
        <dbReference type="ChEBI" id="CHEBI:24875"/>
        <note>catalytic</note>
    </ligand>
</feature>
<feature type="modified residue" description="N-acetylalanine" evidence="2">
    <location>
        <position position="2"/>
    </location>
</feature>
<feature type="modified residue" description="Phosphoserine" evidence="2">
    <location>
        <position position="493"/>
    </location>
</feature>
<feature type="modified residue" description="Phosphoserine" evidence="8">
    <location>
        <position position="547"/>
    </location>
</feature>
<feature type="modified residue" description="Phosphoserine" evidence="8">
    <location>
        <position position="557"/>
    </location>
</feature>
<feature type="modified residue" description="Phosphoserine" evidence="8">
    <location>
        <position position="561"/>
    </location>
</feature>
<feature type="modified residue" description="Phosphothreonine" evidence="2">
    <location>
        <position position="615"/>
    </location>
</feature>
<feature type="modified residue" description="Phosphoserine" evidence="2">
    <location>
        <position position="767"/>
    </location>
</feature>
<feature type="modified residue" description="Phosphoserine" evidence="2">
    <location>
        <position position="774"/>
    </location>
</feature>
<feature type="modified residue" description="Phosphoserine" evidence="2">
    <location>
        <position position="779"/>
    </location>
</feature>
<feature type="modified residue" description="Phosphoserine" evidence="2">
    <location>
        <position position="799"/>
    </location>
</feature>
<feature type="modified residue" description="Phosphoserine" evidence="2">
    <location>
        <position position="1254"/>
    </location>
</feature>
<feature type="modified residue" description="Phosphoserine" evidence="2">
    <location>
        <position position="1260"/>
    </location>
</feature>
<feature type="cross-link" description="Glycyl lysine isopeptide (Lys-Gly) (interchain with G-Cter in SUMO2)" evidence="2">
    <location>
        <position position="789"/>
    </location>
</feature>
<feature type="splice variant" id="VSP_061228" description="In isoform 2." evidence="6">
    <location>
        <begin position="262"/>
        <end position="461"/>
    </location>
</feature>
<feature type="splice variant" id="VSP_061229" description="In isoform 2." evidence="6">
    <original>LTPKLFNSLLLGPTASNSKTEGSSLRDLLHSGPGKLPQTPLDTGIPFPPVFSSSS</original>
    <variation>HVTSDLAHPRRWGCSPSRTLHEHRSLQDPGRAHCFSQEAPGLGNVYLVKNRFVVK</variation>
    <location>
        <begin position="1270"/>
        <end position="1324"/>
    </location>
</feature>
<feature type="splice variant" id="VSP_061230" description="In isoform 2." evidence="6">
    <location>
        <begin position="1325"/>
        <end position="1762"/>
    </location>
</feature>
<feature type="sequence conflict" description="In Ref. 3; AAH31981." evidence="7" ref="3">
    <original>V</original>
    <variation>G</variation>
    <location>
        <position position="1326"/>
    </location>
</feature>
<feature type="sequence conflict" description="In Ref. 4; BAB31043." evidence="7" ref="4">
    <original>NV</original>
    <variation>SL</variation>
    <location>
        <begin position="1569"/>
        <end position="1570"/>
    </location>
</feature>
<feature type="sequence conflict" description="In Ref. 4; BAB31043." evidence="7" ref="4">
    <original>V</original>
    <variation>G</variation>
    <location>
        <position position="1745"/>
    </location>
</feature>
<reference key="1">
    <citation type="journal article" date="2003" name="DNA Res.">
        <title>Prediction of the coding sequences of mouse homologues of KIAA gene: III. The complete nucleotide sequences of 500 mouse KIAA-homologous cDNAs identified by screening of terminal sequences of cDNA clones randomly sampled from size-fractionated libraries.</title>
        <authorList>
            <person name="Okazaki N."/>
            <person name="Kikuno R."/>
            <person name="Ohara R."/>
            <person name="Inamoto S."/>
            <person name="Koseki H."/>
            <person name="Hiraoka S."/>
            <person name="Saga Y."/>
            <person name="Nagase T."/>
            <person name="Ohara O."/>
            <person name="Koga H."/>
        </authorList>
    </citation>
    <scope>NUCLEOTIDE SEQUENCE [LARGE SCALE MRNA] (ISOFORM 2)</scope>
    <source>
        <tissue>Embryonic tail</tissue>
    </source>
</reference>
<reference key="2">
    <citation type="journal article" date="2009" name="PLoS Biol.">
        <title>Lineage-specific biology revealed by a finished genome assembly of the mouse.</title>
        <authorList>
            <person name="Church D.M."/>
            <person name="Goodstadt L."/>
            <person name="Hillier L.W."/>
            <person name="Zody M.C."/>
            <person name="Goldstein S."/>
            <person name="She X."/>
            <person name="Bult C.J."/>
            <person name="Agarwala R."/>
            <person name="Cherry J.L."/>
            <person name="DiCuccio M."/>
            <person name="Hlavina W."/>
            <person name="Kapustin Y."/>
            <person name="Meric P."/>
            <person name="Maglott D."/>
            <person name="Birtle Z."/>
            <person name="Marques A.C."/>
            <person name="Graves T."/>
            <person name="Zhou S."/>
            <person name="Teague B."/>
            <person name="Potamousis K."/>
            <person name="Churas C."/>
            <person name="Place M."/>
            <person name="Herschleb J."/>
            <person name="Runnheim R."/>
            <person name="Forrest D."/>
            <person name="Amos-Landgraf J."/>
            <person name="Schwartz D.C."/>
            <person name="Cheng Z."/>
            <person name="Lindblad-Toh K."/>
            <person name="Eichler E.E."/>
            <person name="Ponting C.P."/>
        </authorList>
    </citation>
    <scope>NUCLEOTIDE SEQUENCE [LARGE SCALE GENOMIC DNA]</scope>
    <source>
        <strain>C57BL/6J</strain>
    </source>
</reference>
<reference key="3">
    <citation type="journal article" date="2004" name="Genome Res.">
        <title>The status, quality, and expansion of the NIH full-length cDNA project: the Mammalian Gene Collection (MGC).</title>
        <authorList>
            <consortium name="The MGC Project Team"/>
        </authorList>
    </citation>
    <scope>NUCLEOTIDE SEQUENCE [LARGE SCALE MRNA] (ISOFORM 1)</scope>
    <source>
        <strain>C57BL/6J</strain>
        <strain>Czech II</strain>
        <tissue>Brain</tissue>
        <tissue>Eye</tissue>
        <tissue>Mammary tumor</tissue>
    </source>
</reference>
<reference key="4">
    <citation type="journal article" date="2005" name="Science">
        <title>The transcriptional landscape of the mammalian genome.</title>
        <authorList>
            <person name="Carninci P."/>
            <person name="Kasukawa T."/>
            <person name="Katayama S."/>
            <person name="Gough J."/>
            <person name="Frith M.C."/>
            <person name="Maeda N."/>
            <person name="Oyama R."/>
            <person name="Ravasi T."/>
            <person name="Lenhard B."/>
            <person name="Wells C."/>
            <person name="Kodzius R."/>
            <person name="Shimokawa K."/>
            <person name="Bajic V.B."/>
            <person name="Brenner S.E."/>
            <person name="Batalov S."/>
            <person name="Forrest A.R."/>
            <person name="Zavolan M."/>
            <person name="Davis M.J."/>
            <person name="Wilming L.G."/>
            <person name="Aidinis V."/>
            <person name="Allen J.E."/>
            <person name="Ambesi-Impiombato A."/>
            <person name="Apweiler R."/>
            <person name="Aturaliya R.N."/>
            <person name="Bailey T.L."/>
            <person name="Bansal M."/>
            <person name="Baxter L."/>
            <person name="Beisel K.W."/>
            <person name="Bersano T."/>
            <person name="Bono H."/>
            <person name="Chalk A.M."/>
            <person name="Chiu K.P."/>
            <person name="Choudhary V."/>
            <person name="Christoffels A."/>
            <person name="Clutterbuck D.R."/>
            <person name="Crowe M.L."/>
            <person name="Dalla E."/>
            <person name="Dalrymple B.P."/>
            <person name="de Bono B."/>
            <person name="Della Gatta G."/>
            <person name="di Bernardo D."/>
            <person name="Down T."/>
            <person name="Engstrom P."/>
            <person name="Fagiolini M."/>
            <person name="Faulkner G."/>
            <person name="Fletcher C.F."/>
            <person name="Fukushima T."/>
            <person name="Furuno M."/>
            <person name="Futaki S."/>
            <person name="Gariboldi M."/>
            <person name="Georgii-Hemming P."/>
            <person name="Gingeras T.R."/>
            <person name="Gojobori T."/>
            <person name="Green R.E."/>
            <person name="Gustincich S."/>
            <person name="Harbers M."/>
            <person name="Hayashi Y."/>
            <person name="Hensch T.K."/>
            <person name="Hirokawa N."/>
            <person name="Hill D."/>
            <person name="Huminiecki L."/>
            <person name="Iacono M."/>
            <person name="Ikeo K."/>
            <person name="Iwama A."/>
            <person name="Ishikawa T."/>
            <person name="Jakt M."/>
            <person name="Kanapin A."/>
            <person name="Katoh M."/>
            <person name="Kawasawa Y."/>
            <person name="Kelso J."/>
            <person name="Kitamura H."/>
            <person name="Kitano H."/>
            <person name="Kollias G."/>
            <person name="Krishnan S.P."/>
            <person name="Kruger A."/>
            <person name="Kummerfeld S.K."/>
            <person name="Kurochkin I.V."/>
            <person name="Lareau L.F."/>
            <person name="Lazarevic D."/>
            <person name="Lipovich L."/>
            <person name="Liu J."/>
            <person name="Liuni S."/>
            <person name="McWilliam S."/>
            <person name="Madan Babu M."/>
            <person name="Madera M."/>
            <person name="Marchionni L."/>
            <person name="Matsuda H."/>
            <person name="Matsuzawa S."/>
            <person name="Miki H."/>
            <person name="Mignone F."/>
            <person name="Miyake S."/>
            <person name="Morris K."/>
            <person name="Mottagui-Tabar S."/>
            <person name="Mulder N."/>
            <person name="Nakano N."/>
            <person name="Nakauchi H."/>
            <person name="Ng P."/>
            <person name="Nilsson R."/>
            <person name="Nishiguchi S."/>
            <person name="Nishikawa S."/>
            <person name="Nori F."/>
            <person name="Ohara O."/>
            <person name="Okazaki Y."/>
            <person name="Orlando V."/>
            <person name="Pang K.C."/>
            <person name="Pavan W.J."/>
            <person name="Pavesi G."/>
            <person name="Pesole G."/>
            <person name="Petrovsky N."/>
            <person name="Piazza S."/>
            <person name="Reed J."/>
            <person name="Reid J.F."/>
            <person name="Ring B.Z."/>
            <person name="Ringwald M."/>
            <person name="Rost B."/>
            <person name="Ruan Y."/>
            <person name="Salzberg S.L."/>
            <person name="Sandelin A."/>
            <person name="Schneider C."/>
            <person name="Schoenbach C."/>
            <person name="Sekiguchi K."/>
            <person name="Semple C.A."/>
            <person name="Seno S."/>
            <person name="Sessa L."/>
            <person name="Sheng Y."/>
            <person name="Shibata Y."/>
            <person name="Shimada H."/>
            <person name="Shimada K."/>
            <person name="Silva D."/>
            <person name="Sinclair B."/>
            <person name="Sperling S."/>
            <person name="Stupka E."/>
            <person name="Sugiura K."/>
            <person name="Sultana R."/>
            <person name="Takenaka Y."/>
            <person name="Taki K."/>
            <person name="Tammoja K."/>
            <person name="Tan S.L."/>
            <person name="Tang S."/>
            <person name="Taylor M.S."/>
            <person name="Tegner J."/>
            <person name="Teichmann S.A."/>
            <person name="Ueda H.R."/>
            <person name="van Nimwegen E."/>
            <person name="Verardo R."/>
            <person name="Wei C.L."/>
            <person name="Yagi K."/>
            <person name="Yamanishi H."/>
            <person name="Zabarovsky E."/>
            <person name="Zhu S."/>
            <person name="Zimmer A."/>
            <person name="Hide W."/>
            <person name="Bult C."/>
            <person name="Grimmond S.M."/>
            <person name="Teasdale R.D."/>
            <person name="Liu E.T."/>
            <person name="Brusic V."/>
            <person name="Quackenbush J."/>
            <person name="Wahlestedt C."/>
            <person name="Mattick J.S."/>
            <person name="Hume D.A."/>
            <person name="Kai C."/>
            <person name="Sasaki D."/>
            <person name="Tomaru Y."/>
            <person name="Fukuda S."/>
            <person name="Kanamori-Katayama M."/>
            <person name="Suzuki M."/>
            <person name="Aoki J."/>
            <person name="Arakawa T."/>
            <person name="Iida J."/>
            <person name="Imamura K."/>
            <person name="Itoh M."/>
            <person name="Kato T."/>
            <person name="Kawaji H."/>
            <person name="Kawagashira N."/>
            <person name="Kawashima T."/>
            <person name="Kojima M."/>
            <person name="Kondo S."/>
            <person name="Konno H."/>
            <person name="Nakano K."/>
            <person name="Ninomiya N."/>
            <person name="Nishio T."/>
            <person name="Okada M."/>
            <person name="Plessy C."/>
            <person name="Shibata K."/>
            <person name="Shiraki T."/>
            <person name="Suzuki S."/>
            <person name="Tagami M."/>
            <person name="Waki K."/>
            <person name="Watahiki A."/>
            <person name="Okamura-Oho Y."/>
            <person name="Suzuki H."/>
            <person name="Kawai J."/>
            <person name="Hayashizaki Y."/>
        </authorList>
    </citation>
    <scope>NUCLEOTIDE SEQUENCE [LARGE SCALE MRNA] OF 1319-1762 (ISOFORM 1)</scope>
    <source>
        <strain>C57BL/6J</strain>
        <tissue>Testis</tissue>
        <tissue>Thymus</tissue>
    </source>
</reference>
<reference key="5">
    <citation type="journal article" date="2010" name="Cell">
        <title>A tissue-specific atlas of mouse protein phosphorylation and expression.</title>
        <authorList>
            <person name="Huttlin E.L."/>
            <person name="Jedrychowski M.P."/>
            <person name="Elias J.E."/>
            <person name="Goswami T."/>
            <person name="Rad R."/>
            <person name="Beausoleil S.A."/>
            <person name="Villen J."/>
            <person name="Haas W."/>
            <person name="Sowa M.E."/>
            <person name="Gygi S.P."/>
        </authorList>
    </citation>
    <scope>PHOSPHORYLATION [LARGE SCALE ANALYSIS] AT SER-547; SER-557 AND SER-561</scope>
    <scope>IDENTIFICATION BY MASS SPECTROMETRY [LARGE SCALE ANALYSIS]</scope>
    <source>
        <tissue>Brain</tissue>
        <tissue>Heart</tissue>
        <tissue>Kidney</tissue>
        <tissue>Lung</tissue>
        <tissue>Spleen</tissue>
        <tissue>Testis</tissue>
    </source>
</reference>
<gene>
    <name type="primary">Kdm3b</name>
    <name type="synonym">Jhdm2b</name>
    <name type="synonym">Jmjd1b</name>
    <name type="synonym">Kiaa1082</name>
</gene>
<evidence type="ECO:0000250" key="1"/>
<evidence type="ECO:0000250" key="2">
    <source>
        <dbReference type="UniProtKB" id="Q7LBC6"/>
    </source>
</evidence>
<evidence type="ECO:0000255" key="3"/>
<evidence type="ECO:0000255" key="4">
    <source>
        <dbReference type="PROSITE-ProRule" id="PRU00538"/>
    </source>
</evidence>
<evidence type="ECO:0000256" key="5">
    <source>
        <dbReference type="SAM" id="MobiDB-lite"/>
    </source>
</evidence>
<evidence type="ECO:0000303" key="6">
    <source>
    </source>
</evidence>
<evidence type="ECO:0000305" key="7"/>
<evidence type="ECO:0007744" key="8">
    <source>
    </source>
</evidence>
<accession>Q6ZPY7</accession>
<accession>B9EKS2</accession>
<accession>Q2VPQ5</accession>
<accession>Q5U5V7</accession>
<accession>Q6P9K3</accession>
<accession>Q8CCE2</accession>
<accession>Q8K2A5</accession>
<accession>Q9CU57</accession>
<proteinExistence type="evidence at protein level"/>
<sequence>MADAAASPVGKRLLLLFADPTASASASAPTAAAVVSGDPGPALRTRAWRAGTVRAMSGAVPQDLAIFVEFDGCNWKQHSWVKVHAEDVLALLLEGSLVWAPRKDPVLLQGTRVPVAQWPALTFTPLVDKLGLGSVVPVEYLVDRELRFLSDANGMHLFQMGTDVQNQILLEHAALRETVNALISDQKLQEIFSRGPYSVQGHRVKVYQPEGEEVWLCGVVSRQDSVTRLMEVSITETGEVKSVDPRLTHVMLMDSSTPQSEGGTIKAVKSSKGKKKRESIEGRDGRRRKSASDSGCDPATKKLKGDRGEVDSNGSDGGEASRGPWKGGNASGEPGLEQRAKQPPSTFVPQINRNIRFATYTKENGRTLVVQDEPVGGDTPVPFTPYASATGQTPLAPEVGGAENKEAGKTLEQVSQGMVASAAVVTTASSTPTTVRISDTGLASGTGPEKQKGSWSQASGENSRNSSLASSGFGVSLSSLSQPLTFGSGRSQSNGVLATDNKPLGFSFSCSSASESQKDSDLSKNLFFQCMSQNVPSTNYLSRVSESVADDSSSRDSFTQSLESLTSGLCKGRSVLGADTQPGPKAGSSVDRKVPAESMPTLTPAFPRSLLNTRTPENHENLFLQPPKLSREEPSNPFLAFVEKVEHSPFSSFVSQASGSSSSATSVTSKATASWPESHSSAESAPLAKKKPLFITTDSSKLVSGVLGSALSTGSPSLSAVGNGRSSSPTNSLTQPIEMPTLSSSPTEERPTVGPGQQDNPLLKTFSTVFGRHSGSFLSAPAEFAQENKAPFEAVKRFSLDERSLACRQDSDSSTNSDLSDLSDSEEQLQAKSGLKGIPEHLMGKLGPNGERSAELLLGKGKGKQAPKGRPRTAPLKVGQSVLKDVSKVRKLKQSGEPFLQDGSCINVAPHLHKCRECRLERYRKFKEQEQDDSTVACRFFHFRRLVFTRKGVLRVEGFLSPQQSDPDAMNLWIPSSSLAEGIDLETSKYILANVGDQFCQLVMSEKEAMMMVEPHQKVAWKRAVRGVREMCDVCETTLFNIHWVCRKCGFGVCLDCYRLRKSRPRSETEEMGDEEVFSWLKCAKGQSHEPENLMPTQIIPGTALYNIGDMVHAARGKWGIKANCPCISRQSKSVLRPAVTNGISQLPSVTPSASSGNETTFSSGGGAAAVTNPEPDQVPKGAGTDGRSEEPLKAEGSASNSNSELKAIRPPCPDTAPPSSALHWLADLATQKAKEETKDAGSLRSVLNKESHSPFGLDSFNSTAKVSPLTPKLFNSLLLGPTASNSKTEGSSLRDLLHSGPGKLPQTPLDTGIPFPPVFSSSSAVAKSKASLPDFLDHIIASVVENKKTSDPSKRSCNLTDTQKEVKEMAMGLNVLDPHTSHSWLCDGRLLCLHDPSNKNNWKIFRECWKQGQPVLVSGVHKKLKSELWKPEAFSQEFGDQDVDLVNCRNCAIISDVKVRDFWDGFEIICKRLRSEDGQPMVLKLKDWPPGEDFRDMMPTRFEDLMENLPLPEYTKRDGRLNLASRLPSYFVRPDLGPKMYNAYGLITAEDRRVGTTNLHLDVSDAVNVMVYVGIPVGEGAHDEEVLKTIDEGDADEVTKQRIHDGKEKPGALWHIYAAKDAEKIRELLRKVGEEQGQENPPDHDPIHDQSWYLDQILRKRLFEEYGVQGWAIVQFLGDAVFIPAGAPHQVHNLYSCIKVAEDFVSPEHVKHCFRLTQEFRHLSNTHTNHEDKLQVKNIIYHAVKDAVGTLKAHESKLARS</sequence>
<keyword id="KW-0007">Acetylation</keyword>
<keyword id="KW-0025">Alternative splicing</keyword>
<keyword id="KW-0156">Chromatin regulator</keyword>
<keyword id="KW-0223">Dioxygenase</keyword>
<keyword id="KW-0408">Iron</keyword>
<keyword id="KW-1017">Isopeptide bond</keyword>
<keyword id="KW-0479">Metal-binding</keyword>
<keyword id="KW-0539">Nucleus</keyword>
<keyword id="KW-0560">Oxidoreductase</keyword>
<keyword id="KW-0597">Phosphoprotein</keyword>
<keyword id="KW-1185">Reference proteome</keyword>
<keyword id="KW-0804">Transcription</keyword>
<keyword id="KW-0805">Transcription regulation</keyword>
<keyword id="KW-0832">Ubl conjugation</keyword>
<keyword id="KW-0862">Zinc</keyword>
<keyword id="KW-0863">Zinc-finger</keyword>
<dbReference type="EC" id="1.14.11.65" evidence="2"/>
<dbReference type="EMBL" id="AK129281">
    <property type="protein sequence ID" value="BAC98091.1"/>
    <property type="status" value="ALT_INIT"/>
    <property type="molecule type" value="mRNA"/>
</dbReference>
<dbReference type="EMBL" id="GL456180">
    <property type="status" value="NOT_ANNOTATED_CDS"/>
    <property type="molecule type" value="Genomic_DNA"/>
</dbReference>
<dbReference type="EMBL" id="BC031981">
    <property type="protein sequence ID" value="AAH31981.1"/>
    <property type="molecule type" value="mRNA"/>
</dbReference>
<dbReference type="EMBL" id="BC038376">
    <property type="protein sequence ID" value="AAH38376.1"/>
    <property type="status" value="ALT_FRAME"/>
    <property type="molecule type" value="mRNA"/>
</dbReference>
<dbReference type="EMBL" id="BC060727">
    <property type="protein sequence ID" value="AAH60727.1"/>
    <property type="molecule type" value="mRNA"/>
</dbReference>
<dbReference type="EMBL" id="BC108415">
    <property type="protein sequence ID" value="AAI08416.1"/>
    <property type="molecule type" value="mRNA"/>
</dbReference>
<dbReference type="EMBL" id="BC151084">
    <property type="protein sequence ID" value="AAI51085.1"/>
    <property type="molecule type" value="mRNA"/>
</dbReference>
<dbReference type="EMBL" id="AK018027">
    <property type="protein sequence ID" value="BAB31043.1"/>
    <property type="molecule type" value="mRNA"/>
</dbReference>
<dbReference type="EMBL" id="AK033343">
    <property type="protein sequence ID" value="BAC28239.1"/>
    <property type="molecule type" value="mRNA"/>
</dbReference>
<dbReference type="CCDS" id="CCDS37761.1">
    <molecule id="Q6ZPY7-1"/>
</dbReference>
<dbReference type="RefSeq" id="NP_001074725.1">
    <molecule id="Q6ZPY7-1"/>
    <property type="nucleotide sequence ID" value="NM_001081256.1"/>
</dbReference>
<dbReference type="SMR" id="Q6ZPY7"/>
<dbReference type="BioGRID" id="234928">
    <property type="interactions" value="1"/>
</dbReference>
<dbReference type="FunCoup" id="Q6ZPY7">
    <property type="interactions" value="3289"/>
</dbReference>
<dbReference type="STRING" id="10090.ENSMUSP00000037628"/>
<dbReference type="GlyGen" id="Q6ZPY7">
    <property type="glycosylation" value="2 sites, 1 O-linked glycan (1 site)"/>
</dbReference>
<dbReference type="iPTMnet" id="Q6ZPY7"/>
<dbReference type="PhosphoSitePlus" id="Q6ZPY7"/>
<dbReference type="SwissPalm" id="Q6ZPY7"/>
<dbReference type="jPOST" id="Q6ZPY7"/>
<dbReference type="PaxDb" id="10090-ENSMUSP00000037628"/>
<dbReference type="PeptideAtlas" id="Q6ZPY7"/>
<dbReference type="ProteomicsDB" id="264985">
    <molecule id="Q6ZPY7-1"/>
</dbReference>
<dbReference type="ProteomicsDB" id="336542"/>
<dbReference type="Pumba" id="Q6ZPY7"/>
<dbReference type="Antibodypedia" id="14936">
    <property type="antibodies" value="360 antibodies from 38 providers"/>
</dbReference>
<dbReference type="Ensembl" id="ENSMUST00000043775.9">
    <molecule id="Q6ZPY7-1"/>
    <property type="protein sequence ID" value="ENSMUSP00000037628.8"/>
    <property type="gene ID" value="ENSMUSG00000038773.12"/>
</dbReference>
<dbReference type="GeneID" id="277250"/>
<dbReference type="KEGG" id="mmu:277250"/>
<dbReference type="UCSC" id="uc008elq.1">
    <property type="organism name" value="mouse"/>
</dbReference>
<dbReference type="AGR" id="MGI:1923356"/>
<dbReference type="CTD" id="51780"/>
<dbReference type="MGI" id="MGI:1923356">
    <property type="gene designation" value="Kdm3b"/>
</dbReference>
<dbReference type="VEuPathDB" id="HostDB:ENSMUSG00000038773"/>
<dbReference type="eggNOG" id="KOG1356">
    <property type="taxonomic scope" value="Eukaryota"/>
</dbReference>
<dbReference type="GeneTree" id="ENSGT00940000158095"/>
<dbReference type="HOGENOM" id="CLU_002991_0_0_1"/>
<dbReference type="InParanoid" id="Q6ZPY7"/>
<dbReference type="OMA" id="IHVVMDT"/>
<dbReference type="OrthoDB" id="1667110at2759"/>
<dbReference type="PhylomeDB" id="Q6ZPY7"/>
<dbReference type="TreeFam" id="TF324723"/>
<dbReference type="BRENDA" id="1.14.11.65">
    <property type="organism ID" value="3474"/>
</dbReference>
<dbReference type="BRENDA" id="1.14.11.66">
    <property type="organism ID" value="3474"/>
</dbReference>
<dbReference type="Reactome" id="R-MMU-3214842">
    <property type="pathway name" value="HDMs demethylate histones"/>
</dbReference>
<dbReference type="BioGRID-ORCS" id="277250">
    <property type="hits" value="11 hits in 82 CRISPR screens"/>
</dbReference>
<dbReference type="ChiTaRS" id="Kdm3b">
    <property type="organism name" value="mouse"/>
</dbReference>
<dbReference type="PRO" id="PR:Q6ZPY7"/>
<dbReference type="Proteomes" id="UP000000589">
    <property type="component" value="Chromosome 18"/>
</dbReference>
<dbReference type="RNAct" id="Q6ZPY7">
    <property type="molecule type" value="protein"/>
</dbReference>
<dbReference type="Bgee" id="ENSMUSG00000038773">
    <property type="expression patterns" value="Expressed in embryonic post-anal tail and 264 other cell types or tissues"/>
</dbReference>
<dbReference type="GO" id="GO:0005654">
    <property type="term" value="C:nucleoplasm"/>
    <property type="evidence" value="ECO:0007669"/>
    <property type="project" value="Ensembl"/>
</dbReference>
<dbReference type="GO" id="GO:0016209">
    <property type="term" value="F:antioxidant activity"/>
    <property type="evidence" value="ECO:0007669"/>
    <property type="project" value="Ensembl"/>
</dbReference>
<dbReference type="GO" id="GO:0140683">
    <property type="term" value="F:histone H3K9me/H3K9me2 demethylase activity"/>
    <property type="evidence" value="ECO:0007669"/>
    <property type="project" value="UniProtKB-EC"/>
</dbReference>
<dbReference type="GO" id="GO:0008270">
    <property type="term" value="F:zinc ion binding"/>
    <property type="evidence" value="ECO:0007669"/>
    <property type="project" value="UniProtKB-KW"/>
</dbReference>
<dbReference type="FunFam" id="2.60.120.650:FF:000004">
    <property type="entry name" value="Putative lysine-specific demethylase 3B"/>
    <property type="match status" value="1"/>
</dbReference>
<dbReference type="Gene3D" id="2.60.120.650">
    <property type="entry name" value="Cupin"/>
    <property type="match status" value="1"/>
</dbReference>
<dbReference type="InterPro" id="IPR054294">
    <property type="entry name" value="DUF7030"/>
</dbReference>
<dbReference type="InterPro" id="IPR045109">
    <property type="entry name" value="JHDM2-like"/>
</dbReference>
<dbReference type="InterPro" id="IPR003347">
    <property type="entry name" value="JmjC_dom"/>
</dbReference>
<dbReference type="InterPro" id="IPR054503">
    <property type="entry name" value="KDM3AB_Tudor"/>
</dbReference>
<dbReference type="InterPro" id="IPR054504">
    <property type="entry name" value="PWWP_KDM3B"/>
</dbReference>
<dbReference type="PANTHER" id="PTHR12549">
    <property type="entry name" value="JMJC DOMAIN-CONTAINING HISTONE DEMETHYLATION PROTEIN"/>
    <property type="match status" value="1"/>
</dbReference>
<dbReference type="PANTHER" id="PTHR12549:SF8">
    <property type="entry name" value="LYSINE-SPECIFIC DEMETHYLASE 3B"/>
    <property type="match status" value="1"/>
</dbReference>
<dbReference type="Pfam" id="PF22989">
    <property type="entry name" value="DUF7030"/>
    <property type="match status" value="1"/>
</dbReference>
<dbReference type="Pfam" id="PF02373">
    <property type="entry name" value="JmjC"/>
    <property type="match status" value="1"/>
</dbReference>
<dbReference type="Pfam" id="PF22988">
    <property type="entry name" value="PWWP_KDM3B"/>
    <property type="match status" value="1"/>
</dbReference>
<dbReference type="Pfam" id="PF22987">
    <property type="entry name" value="Tudor_KDM3B"/>
    <property type="match status" value="1"/>
</dbReference>
<dbReference type="SMART" id="SM00558">
    <property type="entry name" value="JmjC"/>
    <property type="match status" value="1"/>
</dbReference>
<dbReference type="SUPFAM" id="SSF51197">
    <property type="entry name" value="Clavaminate synthase-like"/>
    <property type="match status" value="1"/>
</dbReference>
<dbReference type="PROSITE" id="PS51184">
    <property type="entry name" value="JMJC"/>
    <property type="match status" value="1"/>
</dbReference>
<comment type="function">
    <text evidence="1">Histone demethylase that specifically demethylates 'Lys-9' of histone H3, thereby playing a central role in histone code. Demethylation of Lys residue generates formaldehyde and succinate May have tumor suppressor activity (By similarity).</text>
</comment>
<comment type="catalytic activity">
    <reaction evidence="2">
        <text>N(6),N(6)-dimethyl-L-lysyl(9)-[histone H3] + 2 2-oxoglutarate + 2 O2 = L-lysyl(9)-[histone H3] + 2 formaldehyde + 2 succinate + 2 CO2</text>
        <dbReference type="Rhea" id="RHEA:60188"/>
        <dbReference type="Rhea" id="RHEA-COMP:15541"/>
        <dbReference type="Rhea" id="RHEA-COMP:15546"/>
        <dbReference type="ChEBI" id="CHEBI:15379"/>
        <dbReference type="ChEBI" id="CHEBI:16526"/>
        <dbReference type="ChEBI" id="CHEBI:16810"/>
        <dbReference type="ChEBI" id="CHEBI:16842"/>
        <dbReference type="ChEBI" id="CHEBI:29969"/>
        <dbReference type="ChEBI" id="CHEBI:30031"/>
        <dbReference type="ChEBI" id="CHEBI:61976"/>
        <dbReference type="EC" id="1.14.11.65"/>
    </reaction>
</comment>
<comment type="cofactor">
    <cofactor evidence="1">
        <name>Fe(2+)</name>
        <dbReference type="ChEBI" id="CHEBI:29033"/>
    </cofactor>
    <text evidence="1">Binds 1 Fe(2+) ion per subunit.</text>
</comment>
<comment type="subcellular location">
    <subcellularLocation>
        <location evidence="1">Nucleus</location>
    </subcellularLocation>
</comment>
<comment type="alternative products">
    <event type="alternative splicing"/>
    <isoform>
        <id>Q6ZPY7-1</id>
        <name>1</name>
        <sequence type="displayed"/>
    </isoform>
    <isoform>
        <id>Q6ZPY7-3</id>
        <name>2</name>
        <sequence type="described" ref="VSP_061228 VSP_061229 VSP_061230"/>
    </isoform>
</comment>
<comment type="domain">
    <text evidence="1">Leu-Xaa-Xaa-Leu-Leu (LXXLL) motifs are known to mediate the association with nuclear receptors.</text>
</comment>
<comment type="similarity">
    <text evidence="7">Belongs to the JHDM2 histone demethylase family.</text>
</comment>
<comment type="sequence caution" evidence="7">
    <conflict type="frameshift">
        <sequence resource="EMBL-CDS" id="AAH38376"/>
    </conflict>
</comment>
<comment type="sequence caution" evidence="7">
    <conflict type="erroneous initiation">
        <sequence resource="EMBL-CDS" id="BAC98091"/>
    </conflict>
    <text>Extended N-terminus.</text>
</comment>